<gene>
    <name evidence="1" type="primary">leuA</name>
    <name type="ordered locus">PSPPH_1329</name>
</gene>
<feature type="chain" id="PRO_1000025031" description="2-isopropylmalate synthase">
    <location>
        <begin position="1"/>
        <end position="556"/>
    </location>
</feature>
<feature type="domain" description="Pyruvate carboxyltransferase" evidence="1">
    <location>
        <begin position="33"/>
        <end position="307"/>
    </location>
</feature>
<feature type="region of interest" description="Regulatory domain" evidence="1">
    <location>
        <begin position="439"/>
        <end position="556"/>
    </location>
</feature>
<feature type="binding site" evidence="1">
    <location>
        <position position="42"/>
    </location>
    <ligand>
        <name>Mg(2+)</name>
        <dbReference type="ChEBI" id="CHEBI:18420"/>
    </ligand>
</feature>
<feature type="binding site" evidence="1">
    <location>
        <position position="246"/>
    </location>
    <ligand>
        <name>Mg(2+)</name>
        <dbReference type="ChEBI" id="CHEBI:18420"/>
    </ligand>
</feature>
<feature type="binding site" evidence="1">
    <location>
        <position position="248"/>
    </location>
    <ligand>
        <name>Mg(2+)</name>
        <dbReference type="ChEBI" id="CHEBI:18420"/>
    </ligand>
</feature>
<feature type="binding site" evidence="1">
    <location>
        <position position="282"/>
    </location>
    <ligand>
        <name>Mg(2+)</name>
        <dbReference type="ChEBI" id="CHEBI:18420"/>
    </ligand>
</feature>
<evidence type="ECO:0000255" key="1">
    <source>
        <dbReference type="HAMAP-Rule" id="MF_00572"/>
    </source>
</evidence>
<comment type="function">
    <text evidence="1">Catalyzes the condensation of the acetyl group of acetyl-CoA with 3-methyl-2-oxobutanoate (2-ketoisovalerate) to form 3-carboxy-3-hydroxy-4-methylpentanoate (2-isopropylmalate).</text>
</comment>
<comment type="catalytic activity">
    <reaction evidence="1">
        <text>3-methyl-2-oxobutanoate + acetyl-CoA + H2O = (2S)-2-isopropylmalate + CoA + H(+)</text>
        <dbReference type="Rhea" id="RHEA:21524"/>
        <dbReference type="ChEBI" id="CHEBI:1178"/>
        <dbReference type="ChEBI" id="CHEBI:11851"/>
        <dbReference type="ChEBI" id="CHEBI:15377"/>
        <dbReference type="ChEBI" id="CHEBI:15378"/>
        <dbReference type="ChEBI" id="CHEBI:57287"/>
        <dbReference type="ChEBI" id="CHEBI:57288"/>
        <dbReference type="EC" id="2.3.3.13"/>
    </reaction>
</comment>
<comment type="cofactor">
    <cofactor evidence="1">
        <name>Mg(2+)</name>
        <dbReference type="ChEBI" id="CHEBI:18420"/>
    </cofactor>
</comment>
<comment type="pathway">
    <text evidence="1">Amino-acid biosynthesis; L-leucine biosynthesis; L-leucine from 3-methyl-2-oxobutanoate: step 1/4.</text>
</comment>
<comment type="subunit">
    <text evidence="1">Homodimer.</text>
</comment>
<comment type="subcellular location">
    <subcellularLocation>
        <location evidence="1">Cytoplasm</location>
    </subcellularLocation>
</comment>
<comment type="similarity">
    <text evidence="1">Belongs to the alpha-IPM synthase/homocitrate synthase family. LeuA type 2 subfamily.</text>
</comment>
<name>LEU1_PSE14</name>
<proteinExistence type="inferred from homology"/>
<keyword id="KW-0028">Amino-acid biosynthesis</keyword>
<keyword id="KW-0100">Branched-chain amino acid biosynthesis</keyword>
<keyword id="KW-0963">Cytoplasm</keyword>
<keyword id="KW-0432">Leucine biosynthesis</keyword>
<keyword id="KW-0460">Magnesium</keyword>
<keyword id="KW-0479">Metal-binding</keyword>
<keyword id="KW-0808">Transferase</keyword>
<reference key="1">
    <citation type="journal article" date="2005" name="J. Bacteriol.">
        <title>Whole-genome sequence analysis of Pseudomonas syringae pv. phaseolicola 1448A reveals divergence among pathovars in genes involved in virulence and transposition.</title>
        <authorList>
            <person name="Joardar V."/>
            <person name="Lindeberg M."/>
            <person name="Jackson R.W."/>
            <person name="Selengut J."/>
            <person name="Dodson R."/>
            <person name="Brinkac L.M."/>
            <person name="Daugherty S.C."/>
            <person name="DeBoy R.T."/>
            <person name="Durkin A.S."/>
            <person name="Gwinn Giglio M."/>
            <person name="Madupu R."/>
            <person name="Nelson W.C."/>
            <person name="Rosovitz M.J."/>
            <person name="Sullivan S.A."/>
            <person name="Crabtree J."/>
            <person name="Creasy T."/>
            <person name="Davidsen T.M."/>
            <person name="Haft D.H."/>
            <person name="Zafar N."/>
            <person name="Zhou L."/>
            <person name="Halpin R."/>
            <person name="Holley T."/>
            <person name="Khouri H.M."/>
            <person name="Feldblyum T.V."/>
            <person name="White O."/>
            <person name="Fraser C.M."/>
            <person name="Chatterjee A.K."/>
            <person name="Cartinhour S."/>
            <person name="Schneider D."/>
            <person name="Mansfield J.W."/>
            <person name="Collmer A."/>
            <person name="Buell R."/>
        </authorList>
    </citation>
    <scope>NUCLEOTIDE SEQUENCE [LARGE SCALE GENOMIC DNA]</scope>
    <source>
        <strain>1448A / Race 6</strain>
    </source>
</reference>
<accession>Q48LY5</accession>
<organism>
    <name type="scientific">Pseudomonas savastanoi pv. phaseolicola (strain 1448A / Race 6)</name>
    <name type="common">Pseudomonas syringae pv. phaseolicola (strain 1448A / Race 6)</name>
    <dbReference type="NCBI Taxonomy" id="264730"/>
    <lineage>
        <taxon>Bacteria</taxon>
        <taxon>Pseudomonadati</taxon>
        <taxon>Pseudomonadota</taxon>
        <taxon>Gammaproteobacteria</taxon>
        <taxon>Pseudomonadales</taxon>
        <taxon>Pseudomonadaceae</taxon>
        <taxon>Pseudomonas</taxon>
    </lineage>
</organism>
<dbReference type="EC" id="2.3.3.13" evidence="1"/>
<dbReference type="EMBL" id="CP000058">
    <property type="protein sequence ID" value="AAZ36794.1"/>
    <property type="molecule type" value="Genomic_DNA"/>
</dbReference>
<dbReference type="RefSeq" id="WP_004667426.1">
    <property type="nucleotide sequence ID" value="NC_005773.3"/>
</dbReference>
<dbReference type="SMR" id="Q48LY5"/>
<dbReference type="GeneID" id="69858321"/>
<dbReference type="KEGG" id="psp:PSPPH_1329"/>
<dbReference type="eggNOG" id="COG0119">
    <property type="taxonomic scope" value="Bacteria"/>
</dbReference>
<dbReference type="HOGENOM" id="CLU_004588_3_0_6"/>
<dbReference type="UniPathway" id="UPA00048">
    <property type="reaction ID" value="UER00070"/>
</dbReference>
<dbReference type="Proteomes" id="UP000000551">
    <property type="component" value="Chromosome"/>
</dbReference>
<dbReference type="GO" id="GO:0005737">
    <property type="term" value="C:cytoplasm"/>
    <property type="evidence" value="ECO:0007669"/>
    <property type="project" value="UniProtKB-SubCell"/>
</dbReference>
<dbReference type="GO" id="GO:0003852">
    <property type="term" value="F:2-isopropylmalate synthase activity"/>
    <property type="evidence" value="ECO:0007669"/>
    <property type="project" value="UniProtKB-UniRule"/>
</dbReference>
<dbReference type="GO" id="GO:0003985">
    <property type="term" value="F:acetyl-CoA C-acetyltransferase activity"/>
    <property type="evidence" value="ECO:0007669"/>
    <property type="project" value="UniProtKB-UniRule"/>
</dbReference>
<dbReference type="GO" id="GO:0000287">
    <property type="term" value="F:magnesium ion binding"/>
    <property type="evidence" value="ECO:0007669"/>
    <property type="project" value="UniProtKB-UniRule"/>
</dbReference>
<dbReference type="GO" id="GO:0009098">
    <property type="term" value="P:L-leucine biosynthetic process"/>
    <property type="evidence" value="ECO:0007669"/>
    <property type="project" value="UniProtKB-UniRule"/>
</dbReference>
<dbReference type="CDD" id="cd07942">
    <property type="entry name" value="DRE_TIM_LeuA"/>
    <property type="match status" value="1"/>
</dbReference>
<dbReference type="FunFam" id="3.20.20.70:FF:000045">
    <property type="entry name" value="2-isopropylmalate synthase"/>
    <property type="match status" value="1"/>
</dbReference>
<dbReference type="Gene3D" id="3.30.160.270">
    <property type="match status" value="1"/>
</dbReference>
<dbReference type="Gene3D" id="3.20.20.70">
    <property type="entry name" value="Aldolase class I"/>
    <property type="match status" value="1"/>
</dbReference>
<dbReference type="HAMAP" id="MF_00572">
    <property type="entry name" value="LeuA_type2"/>
    <property type="match status" value="1"/>
</dbReference>
<dbReference type="InterPro" id="IPR013709">
    <property type="entry name" value="2-isopropylmalate_synth_dimer"/>
</dbReference>
<dbReference type="InterPro" id="IPR002034">
    <property type="entry name" value="AIPM/Hcit_synth_CS"/>
</dbReference>
<dbReference type="InterPro" id="IPR013785">
    <property type="entry name" value="Aldolase_TIM"/>
</dbReference>
<dbReference type="InterPro" id="IPR005668">
    <property type="entry name" value="IPM_Synthase"/>
</dbReference>
<dbReference type="InterPro" id="IPR054692">
    <property type="entry name" value="LeuA-like_post-cat"/>
</dbReference>
<dbReference type="InterPro" id="IPR036230">
    <property type="entry name" value="LeuA_allosteric_dom_sf"/>
</dbReference>
<dbReference type="InterPro" id="IPR039371">
    <property type="entry name" value="LeuA_N_DRE-TIM"/>
</dbReference>
<dbReference type="InterPro" id="IPR000891">
    <property type="entry name" value="PYR_CT"/>
</dbReference>
<dbReference type="NCBIfam" id="TIGR00970">
    <property type="entry name" value="leuA_yeast"/>
    <property type="match status" value="1"/>
</dbReference>
<dbReference type="NCBIfam" id="NF002991">
    <property type="entry name" value="PRK03739.1"/>
    <property type="match status" value="1"/>
</dbReference>
<dbReference type="PANTHER" id="PTHR46911">
    <property type="match status" value="1"/>
</dbReference>
<dbReference type="PANTHER" id="PTHR46911:SF1">
    <property type="entry name" value="2-ISOPROPYLMALATE SYNTHASE"/>
    <property type="match status" value="1"/>
</dbReference>
<dbReference type="Pfam" id="PF00682">
    <property type="entry name" value="HMGL-like"/>
    <property type="match status" value="1"/>
</dbReference>
<dbReference type="Pfam" id="PF22615">
    <property type="entry name" value="IPMS_D2"/>
    <property type="match status" value="1"/>
</dbReference>
<dbReference type="Pfam" id="PF08502">
    <property type="entry name" value="LeuA_dimer"/>
    <property type="match status" value="1"/>
</dbReference>
<dbReference type="SMART" id="SM00917">
    <property type="entry name" value="LeuA_dimer"/>
    <property type="match status" value="1"/>
</dbReference>
<dbReference type="SUPFAM" id="SSF110921">
    <property type="entry name" value="2-isopropylmalate synthase LeuA, allosteric (dimerisation) domain"/>
    <property type="match status" value="1"/>
</dbReference>
<dbReference type="SUPFAM" id="SSF51569">
    <property type="entry name" value="Aldolase"/>
    <property type="match status" value="1"/>
</dbReference>
<dbReference type="SUPFAM" id="SSF89000">
    <property type="entry name" value="post-HMGL domain-like"/>
    <property type="match status" value="1"/>
</dbReference>
<dbReference type="PROSITE" id="PS00815">
    <property type="entry name" value="AIPM_HOMOCIT_SYNTH_1"/>
    <property type="match status" value="1"/>
</dbReference>
<dbReference type="PROSITE" id="PS00816">
    <property type="entry name" value="AIPM_HOMOCIT_SYNTH_2"/>
    <property type="match status" value="1"/>
</dbReference>
<dbReference type="PROSITE" id="PS50991">
    <property type="entry name" value="PYR_CT"/>
    <property type="match status" value="1"/>
</dbReference>
<sequence>MTMLKDPSKKYRAFPTIDLPDRTWPSKTIDAAPIWCSSDLRDGNQSLIEPMDAAKKLRFWKTLVSVGVKEIEASFPSASQTDFDFVRTLIEDGHIPDDTTIQVLTQAREDLIARTFESLRGAKKAIVHLYNATSPSFRRIVFNQDKAGVKEIAVNAAKLFVKYAAQQPETQWTFEYSPETFSATELEFAKEVCDAVIEVWNPTPENKVILNLPATVEVATPNIYADQIEWFGRNITRRDSVLISLHTHNDRGTGVAATELGLMAGADRVEGCLFGNGERTGNVDLVTVALNLYTQGIDPELDFSDIDGVRKVVEECNQIPVHPRHPYVGDLVHTAFSGSHQDAIRKGFTQQKDGELWEVPYLPIDPADIGRSYEAVIRVNSQSGKGGITYLLEQEYGISLPRRMQIEFSQVVQGETDRLGLEMSAQQIHSLLRREYLQANTPYALISHKLQEENGNSAVDAEVHVDGETQHWRGKGKGALEALVAGLPVAVEIMDYNEHAIGSGTTAKAAAYIELRVNGERAVHGVGIDENITTASFRALFSALNRSLSQTQAKAA</sequence>
<protein>
    <recommendedName>
        <fullName evidence="1">2-isopropylmalate synthase</fullName>
        <ecNumber evidence="1">2.3.3.13</ecNumber>
    </recommendedName>
    <alternativeName>
        <fullName evidence="1">Alpha-IPM synthase</fullName>
    </alternativeName>
    <alternativeName>
        <fullName evidence="1">Alpha-isopropylmalate synthase</fullName>
    </alternativeName>
</protein>